<evidence type="ECO:0000269" key="1">
    <source>
    </source>
</evidence>
<evidence type="ECO:0000269" key="2">
    <source>
    </source>
</evidence>
<evidence type="ECO:0000269" key="3">
    <source>
    </source>
</evidence>
<evidence type="ECO:0000303" key="4">
    <source>
    </source>
</evidence>
<evidence type="ECO:0000305" key="5"/>
<evidence type="ECO:0000305" key="6">
    <source>
    </source>
</evidence>
<keyword id="KW-0058">Aromatic hydrocarbons catabolism</keyword>
<keyword id="KW-0216">Detoxification</keyword>
<keyword id="KW-1185">Reference proteome</keyword>
<name>BSDD_BACSU</name>
<proteinExistence type="evidence at protein level"/>
<dbReference type="EMBL" id="D50453">
    <property type="protein sequence ID" value="BAA08998.1"/>
    <property type="status" value="ALT_FRAME"/>
    <property type="molecule type" value="Genomic_DNA"/>
</dbReference>
<dbReference type="EMBL" id="AL009126">
    <property type="protein sequence ID" value="CAX52546.1"/>
    <property type="molecule type" value="Genomic_DNA"/>
</dbReference>
<dbReference type="PIR" id="A69762">
    <property type="entry name" value="A69762"/>
</dbReference>
<dbReference type="RefSeq" id="WP_010886405.1">
    <property type="nucleotide sequence ID" value="NZ_OZ025638.1"/>
</dbReference>
<dbReference type="RefSeq" id="YP_003097675.1">
    <property type="nucleotide sequence ID" value="NC_000964.3"/>
</dbReference>
<dbReference type="SMR" id="C0H3U9"/>
<dbReference type="FunCoup" id="C0H3U9">
    <property type="interactions" value="18"/>
</dbReference>
<dbReference type="STRING" id="224308.BSU03651"/>
<dbReference type="PaxDb" id="224308-BSU03651"/>
<dbReference type="EnsemblBacteria" id="CAX52546">
    <property type="protein sequence ID" value="CAX52546"/>
    <property type="gene ID" value="BSU_03651"/>
</dbReference>
<dbReference type="GeneID" id="8302940"/>
<dbReference type="KEGG" id="bsu:BSU03651"/>
<dbReference type="PATRIC" id="fig|224308.179.peg.384"/>
<dbReference type="eggNOG" id="ENOG5032SBW">
    <property type="taxonomic scope" value="Bacteria"/>
</dbReference>
<dbReference type="InParanoid" id="C0H3U9"/>
<dbReference type="OrthoDB" id="5877746at2"/>
<dbReference type="BioCyc" id="BSUB:BSU03651-MONOMER"/>
<dbReference type="BRENDA" id="4.1.1.61">
    <property type="organism ID" value="658"/>
</dbReference>
<dbReference type="Proteomes" id="UP000001570">
    <property type="component" value="Chromosome"/>
</dbReference>
<dbReference type="GO" id="GO:0009056">
    <property type="term" value="P:catabolic process"/>
    <property type="evidence" value="ECO:0007669"/>
    <property type="project" value="UniProtKB-KW"/>
</dbReference>
<dbReference type="GO" id="GO:0009636">
    <property type="term" value="P:response to toxic substance"/>
    <property type="evidence" value="ECO:0007669"/>
    <property type="project" value="UniProtKB-KW"/>
</dbReference>
<dbReference type="InterPro" id="IPR047707">
    <property type="entry name" value="VdcD-like"/>
</dbReference>
<dbReference type="NCBIfam" id="NF041205">
    <property type="entry name" value="VdcD"/>
    <property type="match status" value="1"/>
</dbReference>
<feature type="chain" id="PRO_0000378108" description="Protein BsdD">
    <location>
        <begin position="1"/>
        <end position="75"/>
    </location>
</feature>
<comment type="function">
    <text evidence="2">Involved in the non-oxidative decarboxylation and detoxification of phenolic derivatives under both aerobic and anaerobic conditions, however the precise biochemical function of BsdD in metabolism of phenolic acid is unknown.</text>
</comment>
<comment type="induction">
    <text evidence="1">Up-regulated by salicylate via the transcriptional regulator BsdA.</text>
</comment>
<comment type="disruption phenotype">
    <text evidence="3">A triple bsdB-bsdC-bsdD deletion mutant no longer converts vanillin to guaiacol, the conversion stops at vanillic acid.</text>
</comment>
<comment type="miscellaneous">
    <text evidence="5">It is not known, if phenolic acid decarboxylase forms a complex composed of BsdB, BsdC and BsdD. The term subunit is often used in reference to the operon, however there is no experimental evidence to prove the existence of the complex.</text>
</comment>
<comment type="sequence caution" evidence="5">
    <conflict type="frameshift">
        <sequence resource="EMBL-CDS" id="BAA08998"/>
    </conflict>
</comment>
<protein>
    <recommendedName>
        <fullName evidence="6">Protein BsdD</fullName>
    </recommendedName>
    <alternativeName>
        <fullName evidence="4">Phenolic acid decarboxylase subunit D</fullName>
        <shortName evidence="4">PAD</shortName>
    </alternativeName>
</protein>
<sequence length="75" mass="8569">MHTCPRCDSKKGEVMSKSPVEGAWEVYQCQTCFFTWRSCEPESITNPEKYNPAFKIDPKETETAIEVPAVPERKA</sequence>
<reference key="1">
    <citation type="journal article" date="1996" name="Microbiology">
        <title>The 25 degrees-36 degrees region of the Bacillus subtilis chromosome: determination of the sequence of a 146 kb segment and identification of 113 genes.</title>
        <authorList>
            <person name="Yamane K."/>
            <person name="Kumano M."/>
            <person name="Kurita K."/>
        </authorList>
    </citation>
    <scope>NUCLEOTIDE SEQUENCE [GENOMIC DNA]</scope>
    <source>
        <strain>168</strain>
    </source>
</reference>
<reference key="2">
    <citation type="journal article" date="1997" name="Nature">
        <title>The complete genome sequence of the Gram-positive bacterium Bacillus subtilis.</title>
        <authorList>
            <person name="Kunst F."/>
            <person name="Ogasawara N."/>
            <person name="Moszer I."/>
            <person name="Albertini A.M."/>
            <person name="Alloni G."/>
            <person name="Azevedo V."/>
            <person name="Bertero M.G."/>
            <person name="Bessieres P."/>
            <person name="Bolotin A."/>
            <person name="Borchert S."/>
            <person name="Borriss R."/>
            <person name="Boursier L."/>
            <person name="Brans A."/>
            <person name="Braun M."/>
            <person name="Brignell S.C."/>
            <person name="Bron S."/>
            <person name="Brouillet S."/>
            <person name="Bruschi C.V."/>
            <person name="Caldwell B."/>
            <person name="Capuano V."/>
            <person name="Carter N.M."/>
            <person name="Choi S.-K."/>
            <person name="Codani J.-J."/>
            <person name="Connerton I.F."/>
            <person name="Cummings N.J."/>
            <person name="Daniel R.A."/>
            <person name="Denizot F."/>
            <person name="Devine K.M."/>
            <person name="Duesterhoeft A."/>
            <person name="Ehrlich S.D."/>
            <person name="Emmerson P.T."/>
            <person name="Entian K.-D."/>
            <person name="Errington J."/>
            <person name="Fabret C."/>
            <person name="Ferrari E."/>
            <person name="Foulger D."/>
            <person name="Fritz C."/>
            <person name="Fujita M."/>
            <person name="Fujita Y."/>
            <person name="Fuma S."/>
            <person name="Galizzi A."/>
            <person name="Galleron N."/>
            <person name="Ghim S.-Y."/>
            <person name="Glaser P."/>
            <person name="Goffeau A."/>
            <person name="Golightly E.J."/>
            <person name="Grandi G."/>
            <person name="Guiseppi G."/>
            <person name="Guy B.J."/>
            <person name="Haga K."/>
            <person name="Haiech J."/>
            <person name="Harwood C.R."/>
            <person name="Henaut A."/>
            <person name="Hilbert H."/>
            <person name="Holsappel S."/>
            <person name="Hosono S."/>
            <person name="Hullo M.-F."/>
            <person name="Itaya M."/>
            <person name="Jones L.-M."/>
            <person name="Joris B."/>
            <person name="Karamata D."/>
            <person name="Kasahara Y."/>
            <person name="Klaerr-Blanchard M."/>
            <person name="Klein C."/>
            <person name="Kobayashi Y."/>
            <person name="Koetter P."/>
            <person name="Koningstein G."/>
            <person name="Krogh S."/>
            <person name="Kumano M."/>
            <person name="Kurita K."/>
            <person name="Lapidus A."/>
            <person name="Lardinois S."/>
            <person name="Lauber J."/>
            <person name="Lazarevic V."/>
            <person name="Lee S.-M."/>
            <person name="Levine A."/>
            <person name="Liu H."/>
            <person name="Masuda S."/>
            <person name="Mauel C."/>
            <person name="Medigue C."/>
            <person name="Medina N."/>
            <person name="Mellado R.P."/>
            <person name="Mizuno M."/>
            <person name="Moestl D."/>
            <person name="Nakai S."/>
            <person name="Noback M."/>
            <person name="Noone D."/>
            <person name="O'Reilly M."/>
            <person name="Ogawa K."/>
            <person name="Ogiwara A."/>
            <person name="Oudega B."/>
            <person name="Park S.-H."/>
            <person name="Parro V."/>
            <person name="Pohl T.M."/>
            <person name="Portetelle D."/>
            <person name="Porwollik S."/>
            <person name="Prescott A.M."/>
            <person name="Presecan E."/>
            <person name="Pujic P."/>
            <person name="Purnelle B."/>
            <person name="Rapoport G."/>
            <person name="Rey M."/>
            <person name="Reynolds S."/>
            <person name="Rieger M."/>
            <person name="Rivolta C."/>
            <person name="Rocha E."/>
            <person name="Roche B."/>
            <person name="Rose M."/>
            <person name="Sadaie Y."/>
            <person name="Sato T."/>
            <person name="Scanlan E."/>
            <person name="Schleich S."/>
            <person name="Schroeter R."/>
            <person name="Scoffone F."/>
            <person name="Sekiguchi J."/>
            <person name="Sekowska A."/>
            <person name="Seror S.J."/>
            <person name="Serror P."/>
            <person name="Shin B.-S."/>
            <person name="Soldo B."/>
            <person name="Sorokin A."/>
            <person name="Tacconi E."/>
            <person name="Takagi T."/>
            <person name="Takahashi H."/>
            <person name="Takemaru K."/>
            <person name="Takeuchi M."/>
            <person name="Tamakoshi A."/>
            <person name="Tanaka T."/>
            <person name="Terpstra P."/>
            <person name="Tognoni A."/>
            <person name="Tosato V."/>
            <person name="Uchiyama S."/>
            <person name="Vandenbol M."/>
            <person name="Vannier F."/>
            <person name="Vassarotti A."/>
            <person name="Viari A."/>
            <person name="Wambutt R."/>
            <person name="Wedler E."/>
            <person name="Wedler H."/>
            <person name="Weitzenegger T."/>
            <person name="Winters P."/>
            <person name="Wipat A."/>
            <person name="Yamamoto H."/>
            <person name="Yamane K."/>
            <person name="Yasumoto K."/>
            <person name="Yata K."/>
            <person name="Yoshida K."/>
            <person name="Yoshikawa H.-F."/>
            <person name="Zumstein E."/>
            <person name="Yoshikawa H."/>
            <person name="Danchin A."/>
        </authorList>
    </citation>
    <scope>NUCLEOTIDE SEQUENCE [LARGE SCALE GENOMIC DNA]</scope>
    <source>
        <strain>168</strain>
    </source>
</reference>
<reference key="3">
    <citation type="journal article" date="2007" name="Proteomics">
        <title>The proteome and transcriptome analysis of Bacillus subtilis in response to salicylic acid.</title>
        <authorList>
            <person name="Duy N.V."/>
            <person name="Maeder U."/>
            <person name="Tran N.P."/>
            <person name="Cavin J.-F."/>
            <person name="Tam le T."/>
            <person name="Albrecht D."/>
            <person name="Hecker M."/>
            <person name="Antelmann H."/>
        </authorList>
    </citation>
    <scope>INDUCTION</scope>
    <source>
        <strain>168</strain>
    </source>
</reference>
<reference key="4">
    <citation type="journal article" date="2008" name="Can. J. Microbiol.">
        <title>Properties of the reversible nonoxidative vanillate/4-hydroxybenzoate decarboxylase from Bacillus subtilis.</title>
        <authorList>
            <person name="Lupa B."/>
            <person name="Lyon D."/>
            <person name="Shaw L.N."/>
            <person name="Sieprawska-Lupa M."/>
            <person name="Wiegel J."/>
        </authorList>
    </citation>
    <scope>FUNCTION IN DETOXIFICATION OF PHENOLIC DERIVATIVES</scope>
    <scope>NOMENCLATURE</scope>
    <scope>SEQUENCE REVISION TO 75</scope>
    <source>
        <strain>168 / Marburg / ATCC 6051 / DSM 10 / JCM 1465 / NBRC 13719 / NCIMB 3610 / NRRL NRS-744 / VKM B-501</strain>
    </source>
</reference>
<reference key="5">
    <citation type="journal article" date="2016" name="Appl. Microbiol. Biotechnol.">
        <title>Identification and characterization of the vanillin dehydrogenase YfmT in Bacillus subtilis 3NA.</title>
        <authorList>
            <person name="Graf N."/>
            <person name="Wenzel M."/>
            <person name="Altenbuchner J."/>
        </authorList>
    </citation>
    <scope>DISRUPTION PHENOTYPE</scope>
    <source>
        <strain>168 / 3NA</strain>
    </source>
</reference>
<accession>C0H3U9</accession>
<accession>P94406</accession>
<accession>Q797P7</accession>
<gene>
    <name evidence="4" type="primary">bsdD</name>
    <name type="ordered locus">BSU03651</name>
    <name type="ORF">BSU03650</name>
</gene>
<organism>
    <name type="scientific">Bacillus subtilis (strain 168)</name>
    <dbReference type="NCBI Taxonomy" id="224308"/>
    <lineage>
        <taxon>Bacteria</taxon>
        <taxon>Bacillati</taxon>
        <taxon>Bacillota</taxon>
        <taxon>Bacilli</taxon>
        <taxon>Bacillales</taxon>
        <taxon>Bacillaceae</taxon>
        <taxon>Bacillus</taxon>
    </lineage>
</organism>